<comment type="function">
    <text evidence="1">Responsible for synthesis of pseudouridine from uracil-55 in the psi GC loop of transfer RNAs.</text>
</comment>
<comment type="catalytic activity">
    <reaction evidence="1">
        <text>uridine(55) in tRNA = pseudouridine(55) in tRNA</text>
        <dbReference type="Rhea" id="RHEA:42532"/>
        <dbReference type="Rhea" id="RHEA-COMP:10101"/>
        <dbReference type="Rhea" id="RHEA-COMP:10102"/>
        <dbReference type="ChEBI" id="CHEBI:65314"/>
        <dbReference type="ChEBI" id="CHEBI:65315"/>
        <dbReference type="EC" id="5.4.99.25"/>
    </reaction>
</comment>
<comment type="similarity">
    <text evidence="1">Belongs to the pseudouridine synthase TruB family. Type 1 subfamily.</text>
</comment>
<protein>
    <recommendedName>
        <fullName evidence="1">tRNA pseudouridine synthase B</fullName>
        <ecNumber evidence="1">5.4.99.25</ecNumber>
    </recommendedName>
    <alternativeName>
        <fullName>MTB-TRUB</fullName>
    </alternativeName>
    <alternativeName>
        <fullName evidence="1">tRNA pseudouridine(55) synthase</fullName>
        <shortName evidence="1">Psi55 synthase</shortName>
    </alternativeName>
    <alternativeName>
        <fullName evidence="1">tRNA pseudouridylate synthase</fullName>
    </alternativeName>
    <alternativeName>
        <fullName evidence="1">tRNA-uridine isomerase</fullName>
    </alternativeName>
</protein>
<name>TRUB_MYCTO</name>
<sequence>MSATGPGIVVIDKPAGMTSHDVVGRCRRIFATRRVGHAGTLDPMATGVLVIGIERATKILGLLTAAPKSYAATIRLGQTTSTEDAEGQVLQSVPAKHLTIEAIDAAMERLRGEIRQVPSSVSAIKVGGRRAYRLARQGRSVQLEARPIRIDRFELLAARRRDQLIDIDVEIDCSSGTYIRALARDLGDALGVGGHVTALRRTRVGRFELDQARSLDDLAERPALSLSLDEACLLMFARRDLTAAEASAAANGRSLPAVGIDGVYAACDADGRVIALLRDEGSRTRSVAVLRPATMHPG</sequence>
<dbReference type="EC" id="5.4.99.25" evidence="1"/>
<dbReference type="EMBL" id="AE000516">
    <property type="protein sequence ID" value="AAK47182.1"/>
    <property type="molecule type" value="Genomic_DNA"/>
</dbReference>
<dbReference type="PIR" id="H70884">
    <property type="entry name" value="H70884"/>
</dbReference>
<dbReference type="RefSeq" id="WP_003414147.1">
    <property type="nucleotide sequence ID" value="NZ_KK341227.1"/>
</dbReference>
<dbReference type="SMR" id="P9WHP6"/>
<dbReference type="KEGG" id="mtc:MT2862.1"/>
<dbReference type="PATRIC" id="fig|83331.31.peg.3086"/>
<dbReference type="HOGENOM" id="CLU_032087_0_0_11"/>
<dbReference type="Proteomes" id="UP000001020">
    <property type="component" value="Chromosome"/>
</dbReference>
<dbReference type="GO" id="GO:0003723">
    <property type="term" value="F:RNA binding"/>
    <property type="evidence" value="ECO:0007669"/>
    <property type="project" value="InterPro"/>
</dbReference>
<dbReference type="GO" id="GO:0160148">
    <property type="term" value="F:tRNA pseudouridine(55) synthase activity"/>
    <property type="evidence" value="ECO:0007669"/>
    <property type="project" value="UniProtKB-EC"/>
</dbReference>
<dbReference type="GO" id="GO:1990481">
    <property type="term" value="P:mRNA pseudouridine synthesis"/>
    <property type="evidence" value="ECO:0007669"/>
    <property type="project" value="TreeGrafter"/>
</dbReference>
<dbReference type="GO" id="GO:0031119">
    <property type="term" value="P:tRNA pseudouridine synthesis"/>
    <property type="evidence" value="ECO:0007669"/>
    <property type="project" value="UniProtKB-UniRule"/>
</dbReference>
<dbReference type="CDD" id="cd02573">
    <property type="entry name" value="PseudoU_synth_EcTruB"/>
    <property type="match status" value="1"/>
</dbReference>
<dbReference type="FunFam" id="3.30.2350.10:FF:000011">
    <property type="entry name" value="tRNA pseudouridine synthase B"/>
    <property type="match status" value="1"/>
</dbReference>
<dbReference type="Gene3D" id="3.30.2350.10">
    <property type="entry name" value="Pseudouridine synthase"/>
    <property type="match status" value="1"/>
</dbReference>
<dbReference type="Gene3D" id="2.30.130.10">
    <property type="entry name" value="PUA domain"/>
    <property type="match status" value="1"/>
</dbReference>
<dbReference type="HAMAP" id="MF_01080">
    <property type="entry name" value="TruB_bact"/>
    <property type="match status" value="1"/>
</dbReference>
<dbReference type="InterPro" id="IPR020103">
    <property type="entry name" value="PsdUridine_synth_cat_dom_sf"/>
</dbReference>
<dbReference type="InterPro" id="IPR002501">
    <property type="entry name" value="PsdUridine_synth_N"/>
</dbReference>
<dbReference type="InterPro" id="IPR015947">
    <property type="entry name" value="PUA-like_sf"/>
</dbReference>
<dbReference type="InterPro" id="IPR036974">
    <property type="entry name" value="PUA_sf"/>
</dbReference>
<dbReference type="InterPro" id="IPR015225">
    <property type="entry name" value="tRNA_psdUridine_synth_fam2_C"/>
</dbReference>
<dbReference type="InterPro" id="IPR014780">
    <property type="entry name" value="tRNA_psdUridine_synth_TruB"/>
</dbReference>
<dbReference type="InterPro" id="IPR032819">
    <property type="entry name" value="TruB_C"/>
</dbReference>
<dbReference type="NCBIfam" id="TIGR00431">
    <property type="entry name" value="TruB"/>
    <property type="match status" value="1"/>
</dbReference>
<dbReference type="PANTHER" id="PTHR13767:SF2">
    <property type="entry name" value="PSEUDOURIDYLATE SYNTHASE TRUB1"/>
    <property type="match status" value="1"/>
</dbReference>
<dbReference type="PANTHER" id="PTHR13767">
    <property type="entry name" value="TRNA-PSEUDOURIDINE SYNTHASE"/>
    <property type="match status" value="1"/>
</dbReference>
<dbReference type="Pfam" id="PF09142">
    <property type="entry name" value="TruB_C"/>
    <property type="match status" value="1"/>
</dbReference>
<dbReference type="Pfam" id="PF16198">
    <property type="entry name" value="TruB_C_2"/>
    <property type="match status" value="1"/>
</dbReference>
<dbReference type="Pfam" id="PF01509">
    <property type="entry name" value="TruB_N"/>
    <property type="match status" value="1"/>
</dbReference>
<dbReference type="SUPFAM" id="SSF55120">
    <property type="entry name" value="Pseudouridine synthase"/>
    <property type="match status" value="1"/>
</dbReference>
<dbReference type="SUPFAM" id="SSF88697">
    <property type="entry name" value="PUA domain-like"/>
    <property type="match status" value="1"/>
</dbReference>
<feature type="chain" id="PRO_0000428148" description="tRNA pseudouridine synthase B">
    <location>
        <begin position="1"/>
        <end position="298"/>
    </location>
</feature>
<feature type="active site" description="Nucleophile" evidence="1">
    <location>
        <position position="42"/>
    </location>
</feature>
<evidence type="ECO:0000255" key="1">
    <source>
        <dbReference type="HAMAP-Rule" id="MF_01080"/>
    </source>
</evidence>
<organism>
    <name type="scientific">Mycobacterium tuberculosis (strain CDC 1551 / Oshkosh)</name>
    <dbReference type="NCBI Taxonomy" id="83331"/>
    <lineage>
        <taxon>Bacteria</taxon>
        <taxon>Bacillati</taxon>
        <taxon>Actinomycetota</taxon>
        <taxon>Actinomycetes</taxon>
        <taxon>Mycobacteriales</taxon>
        <taxon>Mycobacteriaceae</taxon>
        <taxon>Mycobacterium</taxon>
        <taxon>Mycobacterium tuberculosis complex</taxon>
    </lineage>
</organism>
<reference key="1">
    <citation type="journal article" date="2002" name="J. Bacteriol.">
        <title>Whole-genome comparison of Mycobacterium tuberculosis clinical and laboratory strains.</title>
        <authorList>
            <person name="Fleischmann R.D."/>
            <person name="Alland D."/>
            <person name="Eisen J.A."/>
            <person name="Carpenter L."/>
            <person name="White O."/>
            <person name="Peterson J.D."/>
            <person name="DeBoy R.T."/>
            <person name="Dodson R.J."/>
            <person name="Gwinn M.L."/>
            <person name="Haft D.H."/>
            <person name="Hickey E.K."/>
            <person name="Kolonay J.F."/>
            <person name="Nelson W.C."/>
            <person name="Umayam L.A."/>
            <person name="Ermolaeva M.D."/>
            <person name="Salzberg S.L."/>
            <person name="Delcher A."/>
            <person name="Utterback T.R."/>
            <person name="Weidman J.F."/>
            <person name="Khouri H.M."/>
            <person name="Gill J."/>
            <person name="Mikula A."/>
            <person name="Bishai W."/>
            <person name="Jacobs W.R. Jr."/>
            <person name="Venter J.C."/>
            <person name="Fraser C.M."/>
        </authorList>
    </citation>
    <scope>NUCLEOTIDE SEQUENCE [LARGE SCALE GENOMIC DNA]</scope>
    <source>
        <strain>CDC 1551 / Oshkosh</strain>
    </source>
</reference>
<keyword id="KW-0413">Isomerase</keyword>
<keyword id="KW-1185">Reference proteome</keyword>
<keyword id="KW-0819">tRNA processing</keyword>
<proteinExistence type="inferred from homology"/>
<accession>P9WHP6</accession>
<accession>L0TDK3</accession>
<accession>O33335</accession>
<accession>P62190</accession>
<gene>
    <name evidence="1" type="primary">truB</name>
    <name type="ordered locus">MT2862.1</name>
</gene>